<protein>
    <recommendedName>
        <fullName evidence="1">3-methyl-2-oxobutanoate hydroxymethyltransferase</fullName>
        <ecNumber evidence="1">2.1.2.11</ecNumber>
    </recommendedName>
    <alternativeName>
        <fullName evidence="1">Ketopantoate hydroxymethyltransferase</fullName>
        <shortName evidence="1">KPHMT</shortName>
    </alternativeName>
</protein>
<accession>Q4UTV5</accession>
<dbReference type="EC" id="2.1.2.11" evidence="1"/>
<dbReference type="EMBL" id="CP000050">
    <property type="protein sequence ID" value="AAY49518.1"/>
    <property type="molecule type" value="Genomic_DNA"/>
</dbReference>
<dbReference type="RefSeq" id="WP_011036941.1">
    <property type="nucleotide sequence ID" value="NZ_CP155948.1"/>
</dbReference>
<dbReference type="SMR" id="Q4UTV5"/>
<dbReference type="KEGG" id="xcb:XC_2468"/>
<dbReference type="HOGENOM" id="CLU_036645_1_0_6"/>
<dbReference type="UniPathway" id="UPA00028">
    <property type="reaction ID" value="UER00003"/>
</dbReference>
<dbReference type="Proteomes" id="UP000000420">
    <property type="component" value="Chromosome"/>
</dbReference>
<dbReference type="GO" id="GO:0005737">
    <property type="term" value="C:cytoplasm"/>
    <property type="evidence" value="ECO:0007669"/>
    <property type="project" value="UniProtKB-SubCell"/>
</dbReference>
<dbReference type="GO" id="GO:0003864">
    <property type="term" value="F:3-methyl-2-oxobutanoate hydroxymethyltransferase activity"/>
    <property type="evidence" value="ECO:0007669"/>
    <property type="project" value="UniProtKB-UniRule"/>
</dbReference>
<dbReference type="GO" id="GO:0000287">
    <property type="term" value="F:magnesium ion binding"/>
    <property type="evidence" value="ECO:0007669"/>
    <property type="project" value="TreeGrafter"/>
</dbReference>
<dbReference type="GO" id="GO:0015940">
    <property type="term" value="P:pantothenate biosynthetic process"/>
    <property type="evidence" value="ECO:0007669"/>
    <property type="project" value="UniProtKB-UniRule"/>
</dbReference>
<dbReference type="CDD" id="cd06557">
    <property type="entry name" value="KPHMT-like"/>
    <property type="match status" value="1"/>
</dbReference>
<dbReference type="FunFam" id="3.20.20.60:FF:000032">
    <property type="entry name" value="3-methyl-2-oxobutanoate hydroxymethyltransferase"/>
    <property type="match status" value="1"/>
</dbReference>
<dbReference type="Gene3D" id="3.20.20.60">
    <property type="entry name" value="Phosphoenolpyruvate-binding domains"/>
    <property type="match status" value="1"/>
</dbReference>
<dbReference type="HAMAP" id="MF_00156">
    <property type="entry name" value="PanB"/>
    <property type="match status" value="1"/>
</dbReference>
<dbReference type="InterPro" id="IPR003700">
    <property type="entry name" value="Pantoate_hydroxy_MeTrfase"/>
</dbReference>
<dbReference type="InterPro" id="IPR015813">
    <property type="entry name" value="Pyrv/PenolPyrv_kinase-like_dom"/>
</dbReference>
<dbReference type="InterPro" id="IPR040442">
    <property type="entry name" value="Pyrv_kinase-like_dom_sf"/>
</dbReference>
<dbReference type="NCBIfam" id="TIGR00222">
    <property type="entry name" value="panB"/>
    <property type="match status" value="1"/>
</dbReference>
<dbReference type="NCBIfam" id="NF001452">
    <property type="entry name" value="PRK00311.1"/>
    <property type="match status" value="1"/>
</dbReference>
<dbReference type="PANTHER" id="PTHR20881">
    <property type="entry name" value="3-METHYL-2-OXOBUTANOATE HYDROXYMETHYLTRANSFERASE"/>
    <property type="match status" value="1"/>
</dbReference>
<dbReference type="PANTHER" id="PTHR20881:SF0">
    <property type="entry name" value="3-METHYL-2-OXOBUTANOATE HYDROXYMETHYLTRANSFERASE"/>
    <property type="match status" value="1"/>
</dbReference>
<dbReference type="Pfam" id="PF02548">
    <property type="entry name" value="Pantoate_transf"/>
    <property type="match status" value="1"/>
</dbReference>
<dbReference type="PIRSF" id="PIRSF000388">
    <property type="entry name" value="Pantoate_hydroxy_MeTrfase"/>
    <property type="match status" value="1"/>
</dbReference>
<dbReference type="SUPFAM" id="SSF51621">
    <property type="entry name" value="Phosphoenolpyruvate/pyruvate domain"/>
    <property type="match status" value="1"/>
</dbReference>
<keyword id="KW-0963">Cytoplasm</keyword>
<keyword id="KW-0460">Magnesium</keyword>
<keyword id="KW-0479">Metal-binding</keyword>
<keyword id="KW-0566">Pantothenate biosynthesis</keyword>
<keyword id="KW-0808">Transferase</keyword>
<name>PANB_XANC8</name>
<gene>
    <name evidence="1" type="primary">panB</name>
    <name type="ordered locus">XC_2468</name>
</gene>
<proteinExistence type="inferred from homology"/>
<evidence type="ECO:0000255" key="1">
    <source>
        <dbReference type="HAMAP-Rule" id="MF_00156"/>
    </source>
</evidence>
<organism>
    <name type="scientific">Xanthomonas campestris pv. campestris (strain 8004)</name>
    <dbReference type="NCBI Taxonomy" id="314565"/>
    <lineage>
        <taxon>Bacteria</taxon>
        <taxon>Pseudomonadati</taxon>
        <taxon>Pseudomonadota</taxon>
        <taxon>Gammaproteobacteria</taxon>
        <taxon>Lysobacterales</taxon>
        <taxon>Lysobacteraceae</taxon>
        <taxon>Xanthomonas</taxon>
    </lineage>
</organism>
<reference key="1">
    <citation type="journal article" date="2005" name="Genome Res.">
        <title>Comparative and functional genomic analyses of the pathogenicity of phytopathogen Xanthomonas campestris pv. campestris.</title>
        <authorList>
            <person name="Qian W."/>
            <person name="Jia Y."/>
            <person name="Ren S.-X."/>
            <person name="He Y.-Q."/>
            <person name="Feng J.-X."/>
            <person name="Lu L.-F."/>
            <person name="Sun Q."/>
            <person name="Ying G."/>
            <person name="Tang D.-J."/>
            <person name="Tang H."/>
            <person name="Wu W."/>
            <person name="Hao P."/>
            <person name="Wang L."/>
            <person name="Jiang B.-L."/>
            <person name="Zeng S."/>
            <person name="Gu W.-Y."/>
            <person name="Lu G."/>
            <person name="Rong L."/>
            <person name="Tian Y."/>
            <person name="Yao Z."/>
            <person name="Fu G."/>
            <person name="Chen B."/>
            <person name="Fang R."/>
            <person name="Qiang B."/>
            <person name="Chen Z."/>
            <person name="Zhao G.-P."/>
            <person name="Tang J.-L."/>
            <person name="He C."/>
        </authorList>
    </citation>
    <scope>NUCLEOTIDE SEQUENCE [LARGE SCALE GENOMIC DNA]</scope>
    <source>
        <strain>8004</strain>
    </source>
</reference>
<feature type="chain" id="PRO_0000297410" description="3-methyl-2-oxobutanoate hydroxymethyltransferase">
    <location>
        <begin position="1"/>
        <end position="271"/>
    </location>
</feature>
<feature type="active site" description="Proton acceptor" evidence="1">
    <location>
        <position position="186"/>
    </location>
</feature>
<feature type="binding site" evidence="1">
    <location>
        <begin position="51"/>
        <end position="52"/>
    </location>
    <ligand>
        <name>3-methyl-2-oxobutanoate</name>
        <dbReference type="ChEBI" id="CHEBI:11851"/>
    </ligand>
</feature>
<feature type="binding site" evidence="1">
    <location>
        <position position="51"/>
    </location>
    <ligand>
        <name>Mg(2+)</name>
        <dbReference type="ChEBI" id="CHEBI:18420"/>
    </ligand>
</feature>
<feature type="binding site" evidence="1">
    <location>
        <position position="90"/>
    </location>
    <ligand>
        <name>3-methyl-2-oxobutanoate</name>
        <dbReference type="ChEBI" id="CHEBI:11851"/>
    </ligand>
</feature>
<feature type="binding site" evidence="1">
    <location>
        <position position="90"/>
    </location>
    <ligand>
        <name>Mg(2+)</name>
        <dbReference type="ChEBI" id="CHEBI:18420"/>
    </ligand>
</feature>
<feature type="binding site" evidence="1">
    <location>
        <position position="118"/>
    </location>
    <ligand>
        <name>3-methyl-2-oxobutanoate</name>
        <dbReference type="ChEBI" id="CHEBI:11851"/>
    </ligand>
</feature>
<feature type="binding site" evidence="1">
    <location>
        <position position="120"/>
    </location>
    <ligand>
        <name>Mg(2+)</name>
        <dbReference type="ChEBI" id="CHEBI:18420"/>
    </ligand>
</feature>
<comment type="function">
    <text evidence="1">Catalyzes the reversible reaction in which hydroxymethyl group from 5,10-methylenetetrahydrofolate is transferred onto alpha-ketoisovalerate to form ketopantoate.</text>
</comment>
<comment type="catalytic activity">
    <reaction evidence="1">
        <text>3-methyl-2-oxobutanoate + (6R)-5,10-methylene-5,6,7,8-tetrahydrofolate + H2O = 2-dehydropantoate + (6S)-5,6,7,8-tetrahydrofolate</text>
        <dbReference type="Rhea" id="RHEA:11824"/>
        <dbReference type="ChEBI" id="CHEBI:11561"/>
        <dbReference type="ChEBI" id="CHEBI:11851"/>
        <dbReference type="ChEBI" id="CHEBI:15377"/>
        <dbReference type="ChEBI" id="CHEBI:15636"/>
        <dbReference type="ChEBI" id="CHEBI:57453"/>
        <dbReference type="EC" id="2.1.2.11"/>
    </reaction>
</comment>
<comment type="cofactor">
    <cofactor evidence="1">
        <name>Mg(2+)</name>
        <dbReference type="ChEBI" id="CHEBI:18420"/>
    </cofactor>
    <text evidence="1">Binds 1 Mg(2+) ion per subunit.</text>
</comment>
<comment type="pathway">
    <text evidence="1">Cofactor biosynthesis; (R)-pantothenate biosynthesis; (R)-pantoate from 3-methyl-2-oxobutanoate: step 1/2.</text>
</comment>
<comment type="subunit">
    <text evidence="1">Homodecamer; pentamer of dimers.</text>
</comment>
<comment type="subcellular location">
    <subcellularLocation>
        <location evidence="1">Cytoplasm</location>
    </subcellularLocation>
</comment>
<comment type="similarity">
    <text evidence="1">Belongs to the PanB family.</text>
</comment>
<sequence length="271" mass="28495">MSSHADSKPWTVPALAQAKRDGRKLVMLTAYDAGFARTFDANGVDLILVGDSLGMVVQGHESTLPVTTADMVYHTAAVARVLERALLVADLSFQADATPERALDAATQLLQAGAEMVKIEGAGHKLDVIRYLVEREIPVCSHLGLTPQSVLRFGGYKVQGRGEAGEQLRRDAQAAVDAGASLIVLECVPTPIAAQISAELRVPTIGIGAGPGCDGQVLVMHDMLGLDSGHRRPKFVKDFLAEGGSVAGAVQAYAQAVRDGSFPDAEHAYAA</sequence>